<proteinExistence type="inferred from homology"/>
<evidence type="ECO:0000255" key="1">
    <source>
        <dbReference type="HAMAP-Rule" id="MF_00013"/>
    </source>
</evidence>
<evidence type="ECO:0000255" key="2">
    <source>
        <dbReference type="PROSITE-ProRule" id="PRU01067"/>
    </source>
</evidence>
<feature type="chain" id="PRO_1000001094" description="Octanoyltransferase">
    <location>
        <begin position="1"/>
        <end position="235"/>
    </location>
</feature>
<feature type="domain" description="BPL/LPL catalytic" evidence="2">
    <location>
        <begin position="30"/>
        <end position="214"/>
    </location>
</feature>
<feature type="active site" description="Acyl-thioester intermediate" evidence="1">
    <location>
        <position position="175"/>
    </location>
</feature>
<feature type="binding site" evidence="1">
    <location>
        <begin position="75"/>
        <end position="82"/>
    </location>
    <ligand>
        <name>substrate</name>
    </ligand>
</feature>
<feature type="binding site" evidence="1">
    <location>
        <begin position="144"/>
        <end position="146"/>
    </location>
    <ligand>
        <name>substrate</name>
    </ligand>
</feature>
<feature type="binding site" evidence="1">
    <location>
        <begin position="157"/>
        <end position="159"/>
    </location>
    <ligand>
        <name>substrate</name>
    </ligand>
</feature>
<feature type="site" description="Lowers pKa of active site Cys" evidence="1">
    <location>
        <position position="141"/>
    </location>
</feature>
<organism>
    <name type="scientific">Caldicellulosiruptor saccharolyticus (strain ATCC 43494 / DSM 8903 / Tp8T 6331)</name>
    <dbReference type="NCBI Taxonomy" id="351627"/>
    <lineage>
        <taxon>Bacteria</taxon>
        <taxon>Bacillati</taxon>
        <taxon>Bacillota</taxon>
        <taxon>Bacillota incertae sedis</taxon>
        <taxon>Caldicellulosiruptorales</taxon>
        <taxon>Caldicellulosiruptoraceae</taxon>
        <taxon>Caldicellulosiruptor</taxon>
    </lineage>
</organism>
<sequence length="235" mass="27131">MKLNVCYLEMVEYEDALHLQERLHKLRVANELEDTLLLLQHPPVITIGRRGKWENILISKEKLLQMGVKVFEVTRGGDVTYHGPGQIVGYPIFDLGTVGKDIKRFVWLLEEVFINLLKDEYGIEAYRDEKQYTGVWVGGEKIVAIGIAVKKWITMHGFAFNVNTNLEHFSWIIPCGLKDRGVTSLEKLLGHKVEFDDVVYKVAKYFGKVFGAKFRFISKEDLEEIIKIKVEDSER</sequence>
<reference key="1">
    <citation type="submission" date="2007-04" db="EMBL/GenBank/DDBJ databases">
        <title>Genome sequence of the thermophilic hydrogen-producing bacterium Caldicellulosiruptor saccharolyticus DSM 8903.</title>
        <authorList>
            <person name="Copeland A."/>
            <person name="Lucas S."/>
            <person name="Lapidus A."/>
            <person name="Barry K."/>
            <person name="Detter J.C."/>
            <person name="Glavina del Rio T."/>
            <person name="Hammon N."/>
            <person name="Israni S."/>
            <person name="Dalin E."/>
            <person name="Tice H."/>
            <person name="Pitluck S."/>
            <person name="Kiss H."/>
            <person name="Brettin T."/>
            <person name="Bruce D."/>
            <person name="Han C."/>
            <person name="Schmutz J."/>
            <person name="Larimer F."/>
            <person name="Land M."/>
            <person name="Hauser L."/>
            <person name="Kyrpides N."/>
            <person name="Lykidis A."/>
            <person name="van de Werken H.J.G."/>
            <person name="Verhaart M.R.A."/>
            <person name="VanFossen A.L."/>
            <person name="Lewis D.L."/>
            <person name="Nichols J.D."/>
            <person name="Goorissen H.P."/>
            <person name="van Niel E.W.J."/>
            <person name="Stams F.J.M."/>
            <person name="Willquist K.U."/>
            <person name="Ward D.E."/>
            <person name="van der Oost J."/>
            <person name="Kelly R.M."/>
            <person name="Kengen S.M.W."/>
            <person name="Richardson P."/>
        </authorList>
    </citation>
    <scope>NUCLEOTIDE SEQUENCE [LARGE SCALE GENOMIC DNA]</scope>
    <source>
        <strain>ATCC 43494 / DSM 8903 / Tp8T 6331</strain>
    </source>
</reference>
<keyword id="KW-0012">Acyltransferase</keyword>
<keyword id="KW-0963">Cytoplasm</keyword>
<keyword id="KW-0808">Transferase</keyword>
<accession>A4XHV1</accession>
<comment type="function">
    <text evidence="1">Catalyzes the transfer of endogenously produced octanoic acid from octanoyl-acyl-carrier-protein onto the lipoyl domains of lipoate-dependent enzymes. Lipoyl-ACP can also act as a substrate although octanoyl-ACP is likely to be the physiological substrate.</text>
</comment>
<comment type="catalytic activity">
    <reaction evidence="1">
        <text>octanoyl-[ACP] + L-lysyl-[protein] = N(6)-octanoyl-L-lysyl-[protein] + holo-[ACP] + H(+)</text>
        <dbReference type="Rhea" id="RHEA:17665"/>
        <dbReference type="Rhea" id="RHEA-COMP:9636"/>
        <dbReference type="Rhea" id="RHEA-COMP:9685"/>
        <dbReference type="Rhea" id="RHEA-COMP:9752"/>
        <dbReference type="Rhea" id="RHEA-COMP:9928"/>
        <dbReference type="ChEBI" id="CHEBI:15378"/>
        <dbReference type="ChEBI" id="CHEBI:29969"/>
        <dbReference type="ChEBI" id="CHEBI:64479"/>
        <dbReference type="ChEBI" id="CHEBI:78463"/>
        <dbReference type="ChEBI" id="CHEBI:78809"/>
        <dbReference type="EC" id="2.3.1.181"/>
    </reaction>
</comment>
<comment type="pathway">
    <text evidence="1">Protein modification; protein lipoylation via endogenous pathway; protein N(6)-(lipoyl)lysine from octanoyl-[acyl-carrier-protein]: step 1/2.</text>
</comment>
<comment type="subcellular location">
    <subcellularLocation>
        <location evidence="1">Cytoplasm</location>
    </subcellularLocation>
</comment>
<comment type="miscellaneous">
    <text evidence="1">In the reaction, the free carboxyl group of octanoic acid is attached via an amide linkage to the epsilon-amino group of a specific lysine residue of lipoyl domains of lipoate-dependent enzymes.</text>
</comment>
<comment type="similarity">
    <text evidence="1">Belongs to the LipB family.</text>
</comment>
<gene>
    <name evidence="1" type="primary">lipB</name>
    <name type="ordered locus">Csac_0870</name>
</gene>
<dbReference type="EC" id="2.3.1.181" evidence="1"/>
<dbReference type="EMBL" id="CP000679">
    <property type="protein sequence ID" value="ABP66486.1"/>
    <property type="molecule type" value="Genomic_DNA"/>
</dbReference>
<dbReference type="RefSeq" id="WP_011916432.1">
    <property type="nucleotide sequence ID" value="NC_009437.1"/>
</dbReference>
<dbReference type="SMR" id="A4XHV1"/>
<dbReference type="STRING" id="351627.Csac_0870"/>
<dbReference type="KEGG" id="csc:Csac_0870"/>
<dbReference type="eggNOG" id="COG0321">
    <property type="taxonomic scope" value="Bacteria"/>
</dbReference>
<dbReference type="HOGENOM" id="CLU_035168_1_3_9"/>
<dbReference type="OrthoDB" id="9787061at2"/>
<dbReference type="UniPathway" id="UPA00538">
    <property type="reaction ID" value="UER00592"/>
</dbReference>
<dbReference type="Proteomes" id="UP000000256">
    <property type="component" value="Chromosome"/>
</dbReference>
<dbReference type="GO" id="GO:0005737">
    <property type="term" value="C:cytoplasm"/>
    <property type="evidence" value="ECO:0007669"/>
    <property type="project" value="UniProtKB-SubCell"/>
</dbReference>
<dbReference type="GO" id="GO:0033819">
    <property type="term" value="F:lipoyl(octanoyl) transferase activity"/>
    <property type="evidence" value="ECO:0007669"/>
    <property type="project" value="UniProtKB-EC"/>
</dbReference>
<dbReference type="GO" id="GO:0036211">
    <property type="term" value="P:protein modification process"/>
    <property type="evidence" value="ECO:0007669"/>
    <property type="project" value="InterPro"/>
</dbReference>
<dbReference type="CDD" id="cd16444">
    <property type="entry name" value="LipB"/>
    <property type="match status" value="1"/>
</dbReference>
<dbReference type="Gene3D" id="3.30.930.10">
    <property type="entry name" value="Bira Bifunctional Protein, Domain 2"/>
    <property type="match status" value="1"/>
</dbReference>
<dbReference type="HAMAP" id="MF_00013">
    <property type="entry name" value="LipB"/>
    <property type="match status" value="1"/>
</dbReference>
<dbReference type="InterPro" id="IPR045864">
    <property type="entry name" value="aa-tRNA-synth_II/BPL/LPL"/>
</dbReference>
<dbReference type="InterPro" id="IPR004143">
    <property type="entry name" value="BPL_LPL_catalytic"/>
</dbReference>
<dbReference type="InterPro" id="IPR000544">
    <property type="entry name" value="Octanoyltransferase"/>
</dbReference>
<dbReference type="InterPro" id="IPR020605">
    <property type="entry name" value="Octanoyltransferase_CS"/>
</dbReference>
<dbReference type="NCBIfam" id="TIGR00214">
    <property type="entry name" value="lipB"/>
    <property type="match status" value="1"/>
</dbReference>
<dbReference type="NCBIfam" id="NF010925">
    <property type="entry name" value="PRK14345.1"/>
    <property type="match status" value="1"/>
</dbReference>
<dbReference type="PANTHER" id="PTHR10993:SF7">
    <property type="entry name" value="LIPOYLTRANSFERASE 2, MITOCHONDRIAL-RELATED"/>
    <property type="match status" value="1"/>
</dbReference>
<dbReference type="PANTHER" id="PTHR10993">
    <property type="entry name" value="OCTANOYLTRANSFERASE"/>
    <property type="match status" value="1"/>
</dbReference>
<dbReference type="Pfam" id="PF21948">
    <property type="entry name" value="LplA-B_cat"/>
    <property type="match status" value="1"/>
</dbReference>
<dbReference type="PIRSF" id="PIRSF016262">
    <property type="entry name" value="LPLase"/>
    <property type="match status" value="1"/>
</dbReference>
<dbReference type="SUPFAM" id="SSF55681">
    <property type="entry name" value="Class II aaRS and biotin synthetases"/>
    <property type="match status" value="1"/>
</dbReference>
<dbReference type="PROSITE" id="PS51733">
    <property type="entry name" value="BPL_LPL_CATALYTIC"/>
    <property type="match status" value="1"/>
</dbReference>
<dbReference type="PROSITE" id="PS01313">
    <property type="entry name" value="LIPB"/>
    <property type="match status" value="1"/>
</dbReference>
<protein>
    <recommendedName>
        <fullName evidence="1">Octanoyltransferase</fullName>
        <ecNumber evidence="1">2.3.1.181</ecNumber>
    </recommendedName>
    <alternativeName>
        <fullName evidence="1">Lipoate-protein ligase B</fullName>
    </alternativeName>
    <alternativeName>
        <fullName evidence="1">Lipoyl/octanoyl transferase</fullName>
    </alternativeName>
    <alternativeName>
        <fullName evidence="1">Octanoyl-[acyl-carrier-protein]-protein N-octanoyltransferase</fullName>
    </alternativeName>
</protein>
<name>LIPB_CALS8</name>